<name>PANC_BURM9</name>
<sequence>MKVISSIQELRDQLRGQNRTAFVPTMGNLHDGHLSLMRLARQHGDPVVASIFVNRLQFGPNEDFDQYPRTLQDDIEKLQKENVYVLFAPTERDMYPEPQEYRVQPPHDLGDILEGEFRPGFFTGVCTVVTKLMACVQPRVAVFGKKDYQQLMIVRRMCQQLALPVEIIAAETVRDADGLALSSRNRYLSEAERAEAPELAKTLAQVRSAVLGGERDLAAIEQRALAHLAARGWKPDYVSIRRRANLVAPSAAHIEAGEPLVVLTAAKLGATRLIDNLEI</sequence>
<dbReference type="EC" id="6.3.2.1" evidence="1"/>
<dbReference type="EMBL" id="CP000546">
    <property type="protein sequence ID" value="ABN01369.1"/>
    <property type="molecule type" value="Genomic_DNA"/>
</dbReference>
<dbReference type="RefSeq" id="WP_004192993.1">
    <property type="nucleotide sequence ID" value="NC_008836.1"/>
</dbReference>
<dbReference type="SMR" id="A2SAF0"/>
<dbReference type="GeneID" id="93059491"/>
<dbReference type="KEGG" id="bml:BMA10229_A2975"/>
<dbReference type="HOGENOM" id="CLU_047148_0_0_4"/>
<dbReference type="UniPathway" id="UPA00028">
    <property type="reaction ID" value="UER00005"/>
</dbReference>
<dbReference type="Proteomes" id="UP000002283">
    <property type="component" value="Chromosome I"/>
</dbReference>
<dbReference type="GO" id="GO:0005829">
    <property type="term" value="C:cytosol"/>
    <property type="evidence" value="ECO:0007669"/>
    <property type="project" value="TreeGrafter"/>
</dbReference>
<dbReference type="GO" id="GO:0005524">
    <property type="term" value="F:ATP binding"/>
    <property type="evidence" value="ECO:0007669"/>
    <property type="project" value="UniProtKB-KW"/>
</dbReference>
<dbReference type="GO" id="GO:0004592">
    <property type="term" value="F:pantoate-beta-alanine ligase activity"/>
    <property type="evidence" value="ECO:0007669"/>
    <property type="project" value="UniProtKB-UniRule"/>
</dbReference>
<dbReference type="GO" id="GO:0015940">
    <property type="term" value="P:pantothenate biosynthetic process"/>
    <property type="evidence" value="ECO:0007669"/>
    <property type="project" value="UniProtKB-UniRule"/>
</dbReference>
<dbReference type="CDD" id="cd00560">
    <property type="entry name" value="PanC"/>
    <property type="match status" value="1"/>
</dbReference>
<dbReference type="Gene3D" id="3.40.50.620">
    <property type="entry name" value="HUPs"/>
    <property type="match status" value="1"/>
</dbReference>
<dbReference type="Gene3D" id="3.30.1300.10">
    <property type="entry name" value="Pantoate-beta-alanine ligase, C-terminal domain"/>
    <property type="match status" value="1"/>
</dbReference>
<dbReference type="HAMAP" id="MF_00158">
    <property type="entry name" value="PanC"/>
    <property type="match status" value="1"/>
</dbReference>
<dbReference type="InterPro" id="IPR004821">
    <property type="entry name" value="Cyt_trans-like"/>
</dbReference>
<dbReference type="InterPro" id="IPR003721">
    <property type="entry name" value="Pantoate_ligase"/>
</dbReference>
<dbReference type="InterPro" id="IPR042176">
    <property type="entry name" value="Pantoate_ligase_C"/>
</dbReference>
<dbReference type="InterPro" id="IPR014729">
    <property type="entry name" value="Rossmann-like_a/b/a_fold"/>
</dbReference>
<dbReference type="NCBIfam" id="TIGR00125">
    <property type="entry name" value="cyt_tran_rel"/>
    <property type="match status" value="1"/>
</dbReference>
<dbReference type="NCBIfam" id="TIGR00018">
    <property type="entry name" value="panC"/>
    <property type="match status" value="1"/>
</dbReference>
<dbReference type="PANTHER" id="PTHR21299">
    <property type="entry name" value="CYTIDYLATE KINASE/PANTOATE-BETA-ALANINE LIGASE"/>
    <property type="match status" value="1"/>
</dbReference>
<dbReference type="PANTHER" id="PTHR21299:SF1">
    <property type="entry name" value="PANTOATE--BETA-ALANINE LIGASE"/>
    <property type="match status" value="1"/>
</dbReference>
<dbReference type="Pfam" id="PF02569">
    <property type="entry name" value="Pantoate_ligase"/>
    <property type="match status" value="1"/>
</dbReference>
<dbReference type="SUPFAM" id="SSF52374">
    <property type="entry name" value="Nucleotidylyl transferase"/>
    <property type="match status" value="1"/>
</dbReference>
<reference key="1">
    <citation type="journal article" date="2010" name="Genome Biol. Evol.">
        <title>Continuing evolution of Burkholderia mallei through genome reduction and large-scale rearrangements.</title>
        <authorList>
            <person name="Losada L."/>
            <person name="Ronning C.M."/>
            <person name="DeShazer D."/>
            <person name="Woods D."/>
            <person name="Fedorova N."/>
            <person name="Kim H.S."/>
            <person name="Shabalina S.A."/>
            <person name="Pearson T.R."/>
            <person name="Brinkac L."/>
            <person name="Tan P."/>
            <person name="Nandi T."/>
            <person name="Crabtree J."/>
            <person name="Badger J."/>
            <person name="Beckstrom-Sternberg S."/>
            <person name="Saqib M."/>
            <person name="Schutzer S.E."/>
            <person name="Keim P."/>
            <person name="Nierman W.C."/>
        </authorList>
    </citation>
    <scope>NUCLEOTIDE SEQUENCE [LARGE SCALE GENOMIC DNA]</scope>
    <source>
        <strain>NCTC 10229</strain>
    </source>
</reference>
<feature type="chain" id="PRO_1000097038" description="Pantothenate synthetase">
    <location>
        <begin position="1"/>
        <end position="279"/>
    </location>
</feature>
<feature type="active site" description="Proton donor" evidence="1">
    <location>
        <position position="33"/>
    </location>
</feature>
<feature type="binding site" evidence="1">
    <location>
        <begin position="26"/>
        <end position="33"/>
    </location>
    <ligand>
        <name>ATP</name>
        <dbReference type="ChEBI" id="CHEBI:30616"/>
    </ligand>
</feature>
<feature type="binding site" evidence="1">
    <location>
        <position position="57"/>
    </location>
    <ligand>
        <name>(R)-pantoate</name>
        <dbReference type="ChEBI" id="CHEBI:15980"/>
    </ligand>
</feature>
<feature type="binding site" evidence="1">
    <location>
        <position position="57"/>
    </location>
    <ligand>
        <name>beta-alanine</name>
        <dbReference type="ChEBI" id="CHEBI:57966"/>
    </ligand>
</feature>
<feature type="binding site" evidence="1">
    <location>
        <begin position="144"/>
        <end position="147"/>
    </location>
    <ligand>
        <name>ATP</name>
        <dbReference type="ChEBI" id="CHEBI:30616"/>
    </ligand>
</feature>
<feature type="binding site" evidence="1">
    <location>
        <position position="150"/>
    </location>
    <ligand>
        <name>(R)-pantoate</name>
        <dbReference type="ChEBI" id="CHEBI:15980"/>
    </ligand>
</feature>
<feature type="binding site" evidence="1">
    <location>
        <position position="173"/>
    </location>
    <ligand>
        <name>ATP</name>
        <dbReference type="ChEBI" id="CHEBI:30616"/>
    </ligand>
</feature>
<feature type="binding site" evidence="1">
    <location>
        <begin position="181"/>
        <end position="184"/>
    </location>
    <ligand>
        <name>ATP</name>
        <dbReference type="ChEBI" id="CHEBI:30616"/>
    </ligand>
</feature>
<protein>
    <recommendedName>
        <fullName evidence="1">Pantothenate synthetase</fullName>
        <shortName evidence="1">PS</shortName>
        <ecNumber evidence="1">6.3.2.1</ecNumber>
    </recommendedName>
    <alternativeName>
        <fullName evidence="1">Pantoate--beta-alanine ligase</fullName>
    </alternativeName>
    <alternativeName>
        <fullName evidence="1">Pantoate-activating enzyme</fullName>
    </alternativeName>
</protein>
<proteinExistence type="inferred from homology"/>
<comment type="function">
    <text evidence="1">Catalyzes the condensation of pantoate with beta-alanine in an ATP-dependent reaction via a pantoyl-adenylate intermediate.</text>
</comment>
<comment type="catalytic activity">
    <reaction evidence="1">
        <text>(R)-pantoate + beta-alanine + ATP = (R)-pantothenate + AMP + diphosphate + H(+)</text>
        <dbReference type="Rhea" id="RHEA:10912"/>
        <dbReference type="ChEBI" id="CHEBI:15378"/>
        <dbReference type="ChEBI" id="CHEBI:15980"/>
        <dbReference type="ChEBI" id="CHEBI:29032"/>
        <dbReference type="ChEBI" id="CHEBI:30616"/>
        <dbReference type="ChEBI" id="CHEBI:33019"/>
        <dbReference type="ChEBI" id="CHEBI:57966"/>
        <dbReference type="ChEBI" id="CHEBI:456215"/>
        <dbReference type="EC" id="6.3.2.1"/>
    </reaction>
</comment>
<comment type="pathway">
    <text evidence="1">Cofactor biosynthesis; (R)-pantothenate biosynthesis; (R)-pantothenate from (R)-pantoate and beta-alanine: step 1/1.</text>
</comment>
<comment type="subunit">
    <text evidence="1">Homodimer.</text>
</comment>
<comment type="subcellular location">
    <subcellularLocation>
        <location evidence="1">Cytoplasm</location>
    </subcellularLocation>
</comment>
<comment type="miscellaneous">
    <text evidence="1">The reaction proceeds by a bi uni uni bi ping pong mechanism.</text>
</comment>
<comment type="similarity">
    <text evidence="1">Belongs to the pantothenate synthetase family.</text>
</comment>
<organism>
    <name type="scientific">Burkholderia mallei (strain NCTC 10229)</name>
    <dbReference type="NCBI Taxonomy" id="412022"/>
    <lineage>
        <taxon>Bacteria</taxon>
        <taxon>Pseudomonadati</taxon>
        <taxon>Pseudomonadota</taxon>
        <taxon>Betaproteobacteria</taxon>
        <taxon>Burkholderiales</taxon>
        <taxon>Burkholderiaceae</taxon>
        <taxon>Burkholderia</taxon>
        <taxon>pseudomallei group</taxon>
    </lineage>
</organism>
<keyword id="KW-0067">ATP-binding</keyword>
<keyword id="KW-0963">Cytoplasm</keyword>
<keyword id="KW-0436">Ligase</keyword>
<keyword id="KW-0547">Nucleotide-binding</keyword>
<keyword id="KW-0566">Pantothenate biosynthesis</keyword>
<accession>A2SAF0</accession>
<evidence type="ECO:0000255" key="1">
    <source>
        <dbReference type="HAMAP-Rule" id="MF_00158"/>
    </source>
</evidence>
<gene>
    <name evidence="1" type="primary">panC</name>
    <name type="ordered locus">BMA10229_A2975</name>
</gene>